<organism>
    <name type="scientific">Mus musculus</name>
    <name type="common">Mouse</name>
    <dbReference type="NCBI Taxonomy" id="10090"/>
    <lineage>
        <taxon>Eukaryota</taxon>
        <taxon>Metazoa</taxon>
        <taxon>Chordata</taxon>
        <taxon>Craniata</taxon>
        <taxon>Vertebrata</taxon>
        <taxon>Euteleostomi</taxon>
        <taxon>Mammalia</taxon>
        <taxon>Eutheria</taxon>
        <taxon>Euarchontoglires</taxon>
        <taxon>Glires</taxon>
        <taxon>Rodentia</taxon>
        <taxon>Myomorpha</taxon>
        <taxon>Muroidea</taxon>
        <taxon>Muridae</taxon>
        <taxon>Murinae</taxon>
        <taxon>Mus</taxon>
        <taxon>Mus</taxon>
    </lineage>
</organism>
<gene>
    <name type="primary">Fcgr2</name>
    <name type="synonym">Fcgr2b</name>
    <name type="synonym">Ly-17</name>
</gene>
<dbReference type="EMBL" id="M16367">
    <property type="protein sequence ID" value="AAA37608.1"/>
    <property type="molecule type" value="mRNA"/>
</dbReference>
<dbReference type="EMBL" id="M14216">
    <property type="protein sequence ID" value="AAA37609.1"/>
    <property type="molecule type" value="mRNA"/>
</dbReference>
<dbReference type="EMBL" id="M17515">
    <property type="protein sequence ID" value="AAA37607.1"/>
    <property type="molecule type" value="mRNA"/>
</dbReference>
<dbReference type="EMBL" id="M31312">
    <property type="protein sequence ID" value="AAA37610.1"/>
    <property type="molecule type" value="Genomic_DNA"/>
</dbReference>
<dbReference type="EMBL" id="X04648">
    <property type="protein sequence ID" value="CAA28309.1"/>
    <property type="status" value="ALT_INIT"/>
    <property type="molecule type" value="mRNA"/>
</dbReference>
<dbReference type="EMBL" id="U31801">
    <property type="protein sequence ID" value="AAA92707.1"/>
    <property type="molecule type" value="mRNA"/>
</dbReference>
<dbReference type="EMBL" id="U31802">
    <property type="protein sequence ID" value="AAA92708.1"/>
    <property type="molecule type" value="mRNA"/>
</dbReference>
<dbReference type="EMBL" id="U31803">
    <property type="protein sequence ID" value="AAA92709.1"/>
    <property type="molecule type" value="mRNA"/>
</dbReference>
<dbReference type="EMBL" id="U31804">
    <property type="protein sequence ID" value="AAA92710.1"/>
    <property type="molecule type" value="mRNA"/>
</dbReference>
<dbReference type="EMBL" id="M14276">
    <property type="protein sequence ID" value="AAA37605.1"/>
    <property type="molecule type" value="mRNA"/>
</dbReference>
<dbReference type="EMBL" id="U51629">
    <property type="protein sequence ID" value="AAA97464.1"/>
    <property type="molecule type" value="mRNA"/>
</dbReference>
<dbReference type="PIR" id="A40071">
    <property type="entry name" value="A40071"/>
</dbReference>
<dbReference type="PIR" id="B40071">
    <property type="entry name" value="FCMSG1"/>
</dbReference>
<dbReference type="PIR" id="I49660">
    <property type="entry name" value="I49660"/>
</dbReference>
<dbReference type="RefSeq" id="NP_034317.1">
    <property type="nucleotide sequence ID" value="NM_010187.2"/>
</dbReference>
<dbReference type="SMR" id="P08101"/>
<dbReference type="BioGRID" id="199619">
    <property type="interactions" value="4"/>
</dbReference>
<dbReference type="ELM" id="P08101"/>
<dbReference type="FunCoup" id="P08101">
    <property type="interactions" value="360"/>
</dbReference>
<dbReference type="IntAct" id="P08101">
    <property type="interactions" value="1"/>
</dbReference>
<dbReference type="MINT" id="P08101"/>
<dbReference type="STRING" id="10090.ENSMUSP00000027966"/>
<dbReference type="MEROPS" id="I43.001"/>
<dbReference type="GlyConnect" id="342">
    <property type="glycosylation" value="18 N-Linked glycans"/>
</dbReference>
<dbReference type="GlyCosmos" id="P08101">
    <property type="glycosylation" value="4 sites, 32 glycans"/>
</dbReference>
<dbReference type="GlyGen" id="P08101">
    <property type="glycosylation" value="6 sites, 36 N-linked glycans (6 sites)"/>
</dbReference>
<dbReference type="iPTMnet" id="P08101"/>
<dbReference type="PhosphoSitePlus" id="P08101"/>
<dbReference type="jPOST" id="P08101"/>
<dbReference type="PaxDb" id="10090-ENSMUSP00000027966"/>
<dbReference type="ProteomicsDB" id="272973">
    <molecule id="P08101-1"/>
</dbReference>
<dbReference type="ProteomicsDB" id="272974">
    <molecule id="P08101-2"/>
</dbReference>
<dbReference type="ProteomicsDB" id="272975">
    <molecule id="P08101-3"/>
</dbReference>
<dbReference type="ABCD" id="P08101">
    <property type="antibodies" value="1 sequenced antibody"/>
</dbReference>
<dbReference type="DNASU" id="14130"/>
<dbReference type="GeneID" id="14130"/>
<dbReference type="KEGG" id="mmu:14130"/>
<dbReference type="UCSC" id="uc007dms.2">
    <molecule id="P08101-1"/>
    <property type="organism name" value="mouse"/>
</dbReference>
<dbReference type="UCSC" id="uc007dmt.2">
    <molecule id="P08101-2"/>
    <property type="organism name" value="mouse"/>
</dbReference>
<dbReference type="AGR" id="MGI:95499"/>
<dbReference type="CTD" id="2213"/>
<dbReference type="MGI" id="MGI:95499">
    <property type="gene designation" value="Fcgr2b"/>
</dbReference>
<dbReference type="eggNOG" id="ENOG502SVEW">
    <property type="taxonomic scope" value="Eukaryota"/>
</dbReference>
<dbReference type="InParanoid" id="P08101"/>
<dbReference type="OrthoDB" id="6151406at2759"/>
<dbReference type="PhylomeDB" id="P08101"/>
<dbReference type="Reactome" id="R-MMU-198933">
    <property type="pathway name" value="Immunoregulatory interactions between a Lymphoid and a non-Lymphoid cell"/>
</dbReference>
<dbReference type="Reactome" id="R-MMU-2029481">
    <property type="pathway name" value="FCGR activation"/>
</dbReference>
<dbReference type="Reactome" id="R-MMU-2029482">
    <property type="pathway name" value="Regulation of actin dynamics for phagocytic cup formation"/>
</dbReference>
<dbReference type="Reactome" id="R-MMU-2029485">
    <property type="pathway name" value="Role of phospholipids in phagocytosis"/>
</dbReference>
<dbReference type="Reactome" id="R-MMU-6798695">
    <property type="pathway name" value="Neutrophil degranulation"/>
</dbReference>
<dbReference type="BioGRID-ORCS" id="14130">
    <property type="hits" value="2 hits in 77 CRISPR screens"/>
</dbReference>
<dbReference type="ChiTaRS" id="Fcgr2b">
    <property type="organism name" value="mouse"/>
</dbReference>
<dbReference type="PRO" id="PR:P08101"/>
<dbReference type="Proteomes" id="UP000000589">
    <property type="component" value="Unplaced"/>
</dbReference>
<dbReference type="RNAct" id="P08101">
    <property type="molecule type" value="protein"/>
</dbReference>
<dbReference type="GO" id="GO:0044297">
    <property type="term" value="C:cell body"/>
    <property type="evidence" value="ECO:0000314"/>
    <property type="project" value="ARUK-UCL"/>
</dbReference>
<dbReference type="GO" id="GO:0005737">
    <property type="term" value="C:cytoplasm"/>
    <property type="evidence" value="ECO:0007669"/>
    <property type="project" value="UniProtKB-KW"/>
</dbReference>
<dbReference type="GO" id="GO:0005856">
    <property type="term" value="C:cytoskeleton"/>
    <property type="evidence" value="ECO:0007669"/>
    <property type="project" value="UniProtKB-SubCell"/>
</dbReference>
<dbReference type="GO" id="GO:0043197">
    <property type="term" value="C:dendritic spine"/>
    <property type="evidence" value="ECO:0000314"/>
    <property type="project" value="ARUK-UCL"/>
</dbReference>
<dbReference type="GO" id="GO:0009897">
    <property type="term" value="C:external side of plasma membrane"/>
    <property type="evidence" value="ECO:0000314"/>
    <property type="project" value="MGI"/>
</dbReference>
<dbReference type="GO" id="GO:0005576">
    <property type="term" value="C:extracellular region"/>
    <property type="evidence" value="ECO:0007669"/>
    <property type="project" value="UniProtKB-SubCell"/>
</dbReference>
<dbReference type="GO" id="GO:0016020">
    <property type="term" value="C:membrane"/>
    <property type="evidence" value="ECO:0000314"/>
    <property type="project" value="MGI"/>
</dbReference>
<dbReference type="GO" id="GO:0005886">
    <property type="term" value="C:plasma membrane"/>
    <property type="evidence" value="ECO:0000314"/>
    <property type="project" value="UniProtKB"/>
</dbReference>
<dbReference type="GO" id="GO:0019864">
    <property type="term" value="F:IgG binding"/>
    <property type="evidence" value="ECO:0000314"/>
    <property type="project" value="MGI"/>
</dbReference>
<dbReference type="GO" id="GO:0019886">
    <property type="term" value="P:antigen processing and presentation of exogenous peptide antigen via MHC class II"/>
    <property type="evidence" value="ECO:0000315"/>
    <property type="project" value="MGI"/>
</dbReference>
<dbReference type="GO" id="GO:0042100">
    <property type="term" value="P:B cell proliferation"/>
    <property type="evidence" value="ECO:0000315"/>
    <property type="project" value="MGI"/>
</dbReference>
<dbReference type="GO" id="GO:0007166">
    <property type="term" value="P:cell surface receptor signaling pathway"/>
    <property type="evidence" value="ECO:0000315"/>
    <property type="project" value="MGI"/>
</dbReference>
<dbReference type="GO" id="GO:1904646">
    <property type="term" value="P:cellular response to amyloid-beta"/>
    <property type="evidence" value="ECO:0000315"/>
    <property type="project" value="ARUK-UCL"/>
</dbReference>
<dbReference type="GO" id="GO:0071219">
    <property type="term" value="P:cellular response to molecule of bacterial origin"/>
    <property type="evidence" value="ECO:0000315"/>
    <property type="project" value="MGI"/>
</dbReference>
<dbReference type="GO" id="GO:0021549">
    <property type="term" value="P:cerebellum development"/>
    <property type="evidence" value="ECO:0000315"/>
    <property type="project" value="ARUK-UCL"/>
</dbReference>
<dbReference type="GO" id="GO:0006952">
    <property type="term" value="P:defense response"/>
    <property type="evidence" value="ECO:0000315"/>
    <property type="project" value="MGI"/>
</dbReference>
<dbReference type="GO" id="GO:0016358">
    <property type="term" value="P:dendrite development"/>
    <property type="evidence" value="ECO:0000315"/>
    <property type="project" value="ARUK-UCL"/>
</dbReference>
<dbReference type="GO" id="GO:0051649">
    <property type="term" value="P:establishment of localization in cell"/>
    <property type="evidence" value="ECO:0000315"/>
    <property type="project" value="MGI"/>
</dbReference>
<dbReference type="GO" id="GO:0160006">
    <property type="term" value="P:Fc receptor-mediated immune complex endocytosis"/>
    <property type="evidence" value="ECO:0000314"/>
    <property type="project" value="UniProtKB"/>
</dbReference>
<dbReference type="GO" id="GO:0016064">
    <property type="term" value="P:immunoglobulin mediated immune response"/>
    <property type="evidence" value="ECO:0000315"/>
    <property type="project" value="MGI"/>
</dbReference>
<dbReference type="GO" id="GO:0002865">
    <property type="term" value="P:negative regulation of acute inflammatory response to antigenic stimulus"/>
    <property type="evidence" value="ECO:0000315"/>
    <property type="project" value="MGI"/>
</dbReference>
<dbReference type="GO" id="GO:0030889">
    <property type="term" value="P:negative regulation of B cell proliferation"/>
    <property type="evidence" value="ECO:0000315"/>
    <property type="project" value="MGI"/>
</dbReference>
<dbReference type="GO" id="GO:0002924">
    <property type="term" value="P:negative regulation of humoral immune response mediated by circulating immunoglobulin"/>
    <property type="evidence" value="ECO:0000315"/>
    <property type="project" value="MGI"/>
</dbReference>
<dbReference type="GO" id="GO:0050777">
    <property type="term" value="P:negative regulation of immune response"/>
    <property type="evidence" value="ECO:0000315"/>
    <property type="project" value="MGI"/>
</dbReference>
<dbReference type="GO" id="GO:0002638">
    <property type="term" value="P:negative regulation of immunoglobulin production"/>
    <property type="evidence" value="ECO:0000315"/>
    <property type="project" value="MGI"/>
</dbReference>
<dbReference type="GO" id="GO:0002862">
    <property type="term" value="P:negative regulation of inflammatory response to antigenic stimulus"/>
    <property type="evidence" value="ECO:0000315"/>
    <property type="project" value="MGI"/>
</dbReference>
<dbReference type="GO" id="GO:0032693">
    <property type="term" value="P:negative regulation of interleukin-10 production"/>
    <property type="evidence" value="ECO:0000315"/>
    <property type="project" value="MGI"/>
</dbReference>
<dbReference type="GO" id="GO:0050765">
    <property type="term" value="P:negative regulation of phagocytosis"/>
    <property type="evidence" value="ECO:0000315"/>
    <property type="project" value="MGI"/>
</dbReference>
<dbReference type="GO" id="GO:0001811">
    <property type="term" value="P:negative regulation of type I hypersensitivity"/>
    <property type="evidence" value="ECO:0000315"/>
    <property type="project" value="MGI"/>
</dbReference>
<dbReference type="GO" id="GO:0006909">
    <property type="term" value="P:phagocytosis"/>
    <property type="evidence" value="ECO:0000315"/>
    <property type="project" value="MGI"/>
</dbReference>
<dbReference type="GO" id="GO:0006911">
    <property type="term" value="P:phagocytosis, engulfment"/>
    <property type="evidence" value="ECO:0000314"/>
    <property type="project" value="MGI"/>
</dbReference>
<dbReference type="GO" id="GO:0046330">
    <property type="term" value="P:positive regulation of JNK cascade"/>
    <property type="evidence" value="ECO:0000315"/>
    <property type="project" value="ARUK-UCL"/>
</dbReference>
<dbReference type="GO" id="GO:0050766">
    <property type="term" value="P:positive regulation of phagocytosis"/>
    <property type="evidence" value="ECO:0000314"/>
    <property type="project" value="MGI"/>
</dbReference>
<dbReference type="GO" id="GO:1905898">
    <property type="term" value="P:positive regulation of response to endoplasmic reticulum stress"/>
    <property type="evidence" value="ECO:0000315"/>
    <property type="project" value="ARUK-UCL"/>
</dbReference>
<dbReference type="GO" id="GO:1902950">
    <property type="term" value="P:regulation of dendritic spine maintenance"/>
    <property type="evidence" value="ECO:0000315"/>
    <property type="project" value="ARUK-UCL"/>
</dbReference>
<dbReference type="GO" id="GO:1903381">
    <property type="term" value="P:regulation of endoplasmic reticulum stress-induced neuron intrinsic apoptotic signaling pathway"/>
    <property type="evidence" value="ECO:0000315"/>
    <property type="project" value="ARUK-UCL"/>
</dbReference>
<dbReference type="GO" id="GO:0048169">
    <property type="term" value="P:regulation of long-term neuronal synaptic plasticity"/>
    <property type="evidence" value="ECO:0000315"/>
    <property type="project" value="ARUK-UCL"/>
</dbReference>
<dbReference type="GO" id="GO:0009617">
    <property type="term" value="P:response to bacterium"/>
    <property type="evidence" value="ECO:0000315"/>
    <property type="project" value="MGI"/>
</dbReference>
<dbReference type="CDD" id="cd05753">
    <property type="entry name" value="Ig2_FcgammaR_like"/>
    <property type="match status" value="1"/>
</dbReference>
<dbReference type="FunFam" id="2.60.40.10:FF:000217">
    <property type="entry name" value="High affinity immunoglobulin gamma Fc receptor I"/>
    <property type="match status" value="1"/>
</dbReference>
<dbReference type="FunFam" id="2.60.40.10:FF:000356">
    <property type="entry name" value="Low affinity immunoglobulin gamma Fc region receptor III-A"/>
    <property type="match status" value="1"/>
</dbReference>
<dbReference type="Gene3D" id="2.60.40.10">
    <property type="entry name" value="Immunoglobulins"/>
    <property type="match status" value="2"/>
</dbReference>
<dbReference type="InterPro" id="IPR007110">
    <property type="entry name" value="Ig-like_dom"/>
</dbReference>
<dbReference type="InterPro" id="IPR036179">
    <property type="entry name" value="Ig-like_dom_sf"/>
</dbReference>
<dbReference type="InterPro" id="IPR013783">
    <property type="entry name" value="Ig-like_fold"/>
</dbReference>
<dbReference type="InterPro" id="IPR050488">
    <property type="entry name" value="Ig_Fc_receptor"/>
</dbReference>
<dbReference type="InterPro" id="IPR003599">
    <property type="entry name" value="Ig_sub"/>
</dbReference>
<dbReference type="PANTHER" id="PTHR11481">
    <property type="entry name" value="IMMUNOGLOBULIN FC RECEPTOR"/>
    <property type="match status" value="1"/>
</dbReference>
<dbReference type="PANTHER" id="PTHR11481:SF97">
    <property type="entry name" value="LOW AFFINITY IMMUNOGLOBULIN GAMMA FC REGION RECEPTOR II-B-RELATED"/>
    <property type="match status" value="1"/>
</dbReference>
<dbReference type="Pfam" id="PF13895">
    <property type="entry name" value="Ig_2"/>
    <property type="match status" value="2"/>
</dbReference>
<dbReference type="SMART" id="SM00409">
    <property type="entry name" value="IG"/>
    <property type="match status" value="2"/>
</dbReference>
<dbReference type="SUPFAM" id="SSF48726">
    <property type="entry name" value="Immunoglobulin"/>
    <property type="match status" value="2"/>
</dbReference>
<dbReference type="PROSITE" id="PS50835">
    <property type="entry name" value="IG_LIKE"/>
    <property type="match status" value="1"/>
</dbReference>
<reference key="1">
    <citation type="journal article" date="1986" name="Science">
        <title>Structural heterogeneity and functional domains of murine immunoglobulin G Fc receptors.</title>
        <authorList>
            <person name="Ravetch J.V."/>
            <person name="Luster A.D."/>
            <person name="Weinshank R."/>
            <person name="Kochan J."/>
            <person name="Pavlovec A."/>
            <person name="Portnoy D.A."/>
            <person name="Hulmes J."/>
            <person name="Pan Y.-C.E."/>
            <person name="Unkeless J.C."/>
        </authorList>
    </citation>
    <scope>NUCLEOTIDE SEQUENCE [MRNA]</scope>
    <scope>PROTEIN SEQUENCE OF 30-51 (ISOFORMS IIB1 AND IIB2)</scope>
</reference>
<reference key="2">
    <citation type="journal article" date="1986" name="Nature">
        <title>A complementary DNA clone for a macrophage-lymphocyte Fc receptor.</title>
        <authorList>
            <person name="Lewis V.A."/>
            <person name="Koch T."/>
            <person name="Plutner H."/>
            <person name="Mellman I."/>
        </authorList>
    </citation>
    <scope>NUCLEOTIDE SEQUENCE [MRNA] (ISOFORM IIB2)</scope>
    <source>
        <tissue>Macrophage</tissue>
    </source>
</reference>
<reference key="3">
    <citation type="journal article" date="1987" name="Immunogenetics">
        <title>The mouse Fc receptor for IgG (Ly-17): molecular cloning and specificity.</title>
        <authorList>
            <person name="Hogarth P.M."/>
            <person name="Hibbs M.L."/>
            <person name="Bonadonna L."/>
            <person name="Scott B.M."/>
            <person name="Witort E."/>
            <person name="Pietersz G.A."/>
            <person name="McKenzie I.F.C."/>
        </authorList>
    </citation>
    <scope>NUCLEOTIDE SEQUENCE [MRNA]</scope>
    <scope>PARTIAL PROTEIN SEQUENCE (ISOFORM IIB1)</scope>
</reference>
<reference key="4">
    <citation type="journal article" date="1990" name="Immunogenetics">
        <title>Identification of the mouse beta Fc gamma RII polymorphism by direct sequencing of amplified genomic DNA.</title>
        <authorList>
            <person name="Lah M."/>
            <person name="Quelch K."/>
            <person name="Deacon N.J."/>
            <person name="McKenzie I.F."/>
            <person name="Hogarth P.M."/>
        </authorList>
    </citation>
    <scope>NUCLEOTIDE SEQUENCE [GENOMIC DNA] (ISOFORM IIB1)</scope>
    <scope>POLYMORPHISM</scope>
    <scope>VARIANTS</scope>
    <source>
        <strain>BALB/cJ</strain>
        <tissue>Spleen</tissue>
    </source>
</reference>
<reference key="5">
    <citation type="journal article" date="1991" name="J. Immunol.">
        <title>Structure of the mouse beta Fc gamma receptor II gene.</title>
        <authorList>
            <person name="Hogarth P.M."/>
            <person name="Witort E."/>
            <person name="Hulett M.D."/>
            <person name="Bonnerot C."/>
            <person name="Even J."/>
            <person name="Fridman W.H."/>
            <person name="McKenzie I.F.C."/>
        </authorList>
    </citation>
    <scope>NUCLEOTIDE SEQUENCE (ISOFORMS IIB1 AND IIB2)</scope>
</reference>
<reference key="6">
    <citation type="journal article" date="1996" name="J. Immunol.">
        <title>Identification, molecular cloning, biologic properties, and tissue distribution of a novel isoform of murine low-affinity IgG receptor homologous to human Fc gamma RIIB1.</title>
        <authorList>
            <person name="Latour S."/>
            <person name="Fridman W.H."/>
            <person name="Daeron M."/>
        </authorList>
    </citation>
    <scope>NUCLEOTIDE SEQUENCE [MRNA] (ISOFORM IIB1')</scope>
    <source>
        <strain>DBA/2J</strain>
        <tissue>Mast cell</tissue>
    </source>
</reference>
<reference key="7">
    <citation type="journal article" date="1996" name="Immunogenetics">
        <title>Nonsynonymous mutations in an Fc-receptor structural gene in NZB mice.</title>
        <authorList>
            <person name="Sawchuk D.J."/>
            <person name="Mahmoudi M."/>
            <person name="Cairns E."/>
            <person name="Sinclair N.R.S."/>
        </authorList>
    </citation>
    <scope>NUCLEOTIDE SEQUENCE [MRNA] OF 30-330 (ISOFORMS IIB1 AND IIB2)</scope>
    <source>
        <strain>DBA/2J</strain>
        <strain>NZB</strain>
        <tissue>Spleen</tissue>
    </source>
</reference>
<reference key="8">
    <citation type="journal article" date="1986" name="Proc. Natl. Acad. Sci. U.S.A.">
        <title>The murine Fc receptor for immunoglobulin: purification, partial amino acid sequence, and isolation of cDNA clones.</title>
        <authorList>
            <person name="Hibbs M.L."/>
            <person name="Walker I.D."/>
            <person name="Kirszbaum L."/>
            <person name="Peitersz G.A."/>
            <person name="Deacon N.J."/>
            <person name="Chambers G.W."/>
            <person name="McKenzie I.F.C."/>
            <person name="Hogarth P.M."/>
        </authorList>
    </citation>
    <scope>NUCLEOTIDE SEQUENCE [MRNA] OF 17-45</scope>
</reference>
<reference key="9">
    <citation type="journal article" date="1993" name="Int. Immunol.">
        <title>Identification, in mouse macrophages and in serum, of a soluble receptor for the Fc portion of IgG (Fc gamma R) encoded by an alternatively spliced transcript of the Fc gamma RII gene.</title>
        <authorList>
            <person name="Tartour E."/>
            <person name="de la Salle H."/>
            <person name="de la Salle C."/>
            <person name="Teillaud C."/>
            <person name="Camoin L."/>
            <person name="Galinha A."/>
            <person name="Latour S."/>
            <person name="Hanau D."/>
            <person name="Fridman W.H."/>
            <person name="Sautes C."/>
        </authorList>
    </citation>
    <scope>CHARACTERIZATION OF ISOFORM IIB3</scope>
    <source>
        <tissue>Macrophage</tissue>
    </source>
</reference>
<reference key="10">
    <citation type="journal article" date="1998" name="J. Immunol.">
        <title>Fc epsilon receptor I-associated lyn-dependent phosphorylation of Fc gamma receptor IIB during negative regulation of mast cell activation.</title>
        <authorList>
            <person name="Malbec O."/>
            <person name="Fong D.C."/>
            <person name="Turner M."/>
            <person name="Tybulewicz V.L."/>
            <person name="Cambier J.C."/>
            <person name="Fridman W.H."/>
            <person name="Daeron M."/>
        </authorList>
    </citation>
    <scope>PHOSPHORYLATION</scope>
    <scope>INTERACTION WITH LYN</scope>
</reference>
<reference key="11">
    <citation type="journal article" date="2000" name="J. Immunol.">
        <title>Mutational analysis reveals multiple distinct sites within Fc gamma receptor IIB that function in inhibitory signaling.</title>
        <authorList>
            <person name="Fong D.C."/>
            <person name="Brauweiler A."/>
            <person name="Minskoff S.A."/>
            <person name="Bruhns P."/>
            <person name="Tamir I."/>
            <person name="Mellman I."/>
            <person name="Daeron M."/>
            <person name="Cambier J.C."/>
        </authorList>
    </citation>
    <scope>PHOSPHORYLATION AT TYR-290; TYR-309 AND TYR-326</scope>
</reference>
<evidence type="ECO:0000250" key="1"/>
<evidence type="ECO:0000255" key="2"/>
<evidence type="ECO:0000255" key="3">
    <source>
        <dbReference type="PROSITE-ProRule" id="PRU00114"/>
    </source>
</evidence>
<evidence type="ECO:0000256" key="4">
    <source>
        <dbReference type="SAM" id="MobiDB-lite"/>
    </source>
</evidence>
<evidence type="ECO:0000269" key="5">
    <source>
    </source>
</evidence>
<evidence type="ECO:0000269" key="6">
    <source>
    </source>
</evidence>
<evidence type="ECO:0000269" key="7">
    <source>
    </source>
</evidence>
<evidence type="ECO:0000303" key="8">
    <source>
    </source>
</evidence>
<evidence type="ECO:0000303" key="9">
    <source>
    </source>
</evidence>
<evidence type="ECO:0000303" key="10">
    <source>
    </source>
</evidence>
<evidence type="ECO:0000305" key="11"/>
<proteinExistence type="evidence at protein level"/>
<accession>P08101</accession>
<accession>P08102</accession>
<accession>P12316</accession>
<accession>P97917</accession>
<accession>Q60938</accession>
<accession>Q60939</accession>
<accession>Q60940</accession>
<accession>Q61170</accession>
<accession>Q61558</accession>
<feature type="signal peptide">
    <location>
        <begin position="1"/>
        <end position="29"/>
    </location>
</feature>
<feature type="chain" id="PRO_0000015143" description="Low affinity immunoglobulin gamma Fc region receptor II">
    <location>
        <begin position="30"/>
        <end position="330"/>
    </location>
</feature>
<feature type="topological domain" description="Extracellular" evidence="2">
    <location>
        <begin position="30"/>
        <end position="210"/>
    </location>
</feature>
<feature type="transmembrane region" description="Helical" evidence="2">
    <location>
        <begin position="211"/>
        <end position="231"/>
    </location>
</feature>
<feature type="topological domain" description="Cytoplasmic" evidence="2">
    <location>
        <begin position="232"/>
        <end position="330"/>
    </location>
</feature>
<feature type="domain" description="Ig-like C2-type 1">
    <location>
        <begin position="50"/>
        <end position="106"/>
    </location>
</feature>
<feature type="domain" description="Ig-like C2-type 2">
    <location>
        <begin position="131"/>
        <end position="189"/>
    </location>
</feature>
<feature type="region of interest" description="Disordered" evidence="4">
    <location>
        <begin position="261"/>
        <end position="330"/>
    </location>
</feature>
<feature type="short sequence motif" description="ITIM motif">
    <location>
        <begin position="307"/>
        <end position="312"/>
    </location>
</feature>
<feature type="modified residue" description="Phosphotyrosine" evidence="5">
    <location>
        <position position="290"/>
    </location>
</feature>
<feature type="modified residue" description="Phosphotyrosine; by SRC-type Tyr-kinases" evidence="1">
    <location>
        <position position="309"/>
    </location>
</feature>
<feature type="modified residue" description="Phosphotyrosine" evidence="5">
    <location>
        <position position="326"/>
    </location>
</feature>
<feature type="glycosylation site" description="N-linked (GlcNAc...) asparagine" evidence="2">
    <location>
        <position position="65"/>
    </location>
</feature>
<feature type="glycosylation site" description="N-linked (GlcNAc...) asparagine" evidence="2">
    <location>
        <position position="92"/>
    </location>
</feature>
<feature type="glycosylation site" description="N-linked (GlcNAc...) asparagine" evidence="2">
    <location>
        <position position="166"/>
    </location>
</feature>
<feature type="glycosylation site" description="N-linked (GlcNAc...) asparagine" evidence="2">
    <location>
        <position position="173"/>
    </location>
</feature>
<feature type="disulfide bond" evidence="3">
    <location>
        <begin position="57"/>
        <end position="99"/>
    </location>
</feature>
<feature type="disulfide bond" evidence="3">
    <location>
        <begin position="138"/>
        <end position="182"/>
    </location>
</feature>
<feature type="splice variant" id="VSP_002640" description="In isoform IIB2." evidence="8 9">
    <original>ALPGNPDHREMGETLPEEVGEYRQPSGGSVPVSPGPPSGLEPTSSSPY</original>
    <variation>D</variation>
    <location>
        <begin position="243"/>
        <end position="290"/>
    </location>
</feature>
<feature type="splice variant" id="VSP_002641" description="In isoform IIB1'." evidence="10">
    <original>GEYRQPSGGSVPVSPGPPSGLEPTSSSPY</original>
    <variation>D</variation>
    <location>
        <begin position="262"/>
        <end position="290"/>
    </location>
</feature>
<feature type="sequence variant" description="In strain: DBA/2; Ly17.2 allotype." evidence="6">
    <original>S</original>
    <variation>L</variation>
    <location>
        <position position="116"/>
    </location>
</feature>
<feature type="sequence variant" description="In strain: NZB; Ly17.1 allotype." evidence="6">
    <original>S</original>
    <variation>P</variation>
    <location>
        <position position="116"/>
    </location>
</feature>
<feature type="sequence variant">
    <original>L</original>
    <variation>P</variation>
    <location>
        <position position="145"/>
    </location>
</feature>
<feature type="sequence variant" description="In strain: DBA/2; Ly17.2 allotype." evidence="6">
    <original>H</original>
    <variation>L</variation>
    <location>
        <position position="161"/>
    </location>
</feature>
<feature type="sequence variant" description="In strain: NZB; Ly17.1 allotype." evidence="6">
    <original>H</original>
    <variation>Q</variation>
    <location>
        <position position="161"/>
    </location>
</feature>
<feature type="sequence variant">
    <original>L</original>
    <variation>Q</variation>
    <location>
        <position position="190"/>
    </location>
</feature>
<feature type="sequence variant" description="In strain: NZB.">
    <original>P</original>
    <variation>T</variation>
    <location>
        <position position="195"/>
    </location>
</feature>
<feature type="sequence variant" description="In strain: NZB.">
    <original>S</original>
    <variation>I</variation>
    <location>
        <position position="287"/>
    </location>
</feature>
<feature type="sequence conflict" description="In Ref. 1; AAA37608." evidence="11" ref="1">
    <original>GSVPVSPGP</original>
    <variation>LSACQPRA</variation>
    <location>
        <begin position="270"/>
        <end position="278"/>
    </location>
</feature>
<feature type="sequence conflict" description="In Ref. 3 and 4." evidence="11" ref="3 4">
    <original>A</original>
    <variation>P</variation>
    <location>
        <position position="299"/>
    </location>
</feature>
<comment type="function">
    <text>Receptor for the Fc region of complexed immunoglobulins gamma. Low affinity receptor. Involved in a variety of effector and regulatory functions such as phagocytosis of antigen-antibody complexes from the circulation and modulation of antibody production by B-cells. Isoform IIB1 and isoform IIB1' form caps but fail to mediate endocytosis or phagocytosis. Isoform IIB2 can mediate the endocytosis of soluble immune complexes via clathrin-coated pits. Isoform IIB1 and isoform IIB2 can down-regulate B-cell, T-cell, and mast cell activation when coaggregated to B-cell receptors for AG (BCR), T-cell receptors for AG (TCR), and Fc receptors, respectively.</text>
</comment>
<comment type="subunit">
    <text evidence="1 7">Interacts with FGR (By similarity). Interacts with LYN.</text>
</comment>
<comment type="subcellular location">
    <subcellularLocation>
        <location>Cell membrane</location>
        <topology>Single-pass type I membrane protein</topology>
    </subcellularLocation>
</comment>
<comment type="subcellular location">
    <molecule>Isoform IIB1</molecule>
    <subcellularLocation>
        <location>Cytoplasm</location>
        <location>Cytoskeleton</location>
    </subcellularLocation>
    <text>Binds the cytoskeleton and is not localized in endocytotic pits.</text>
</comment>
<comment type="subcellular location">
    <molecule>Isoform IIB3</molecule>
    <subcellularLocation>
        <location>Secreted</location>
    </subcellularLocation>
    <text>Released as a soluble molecule.</text>
</comment>
<comment type="alternative products">
    <event type="alternative splicing"/>
    <isoform>
        <id>P08101-1</id>
        <name>IIB1</name>
        <name>Beta-1</name>
        <sequence type="displayed"/>
    </isoform>
    <isoform>
        <id>P08101-2</id>
        <name>IIB2</name>
        <name>Beta-2</name>
        <sequence type="described" ref="VSP_002640"/>
    </isoform>
    <isoform>
        <id>P08101-3</id>
        <name>IIB1'</name>
        <name>Beta-1'</name>
        <sequence type="described" ref="VSP_002641"/>
    </isoform>
    <isoform>
        <id>P08101-4</id>
        <name>IIB3</name>
        <name>Beta-3</name>
        <sequence type="not described"/>
    </isoform>
</comment>
<comment type="tissue specificity">
    <text>Widely expressed by cells of hemopoietic origin. The isoforms are differentially expressed. Isoform IIB1 is preferentially expressed by cells of the lymphoid lineage, isoform IIB2 by cells of the myeloid lineage, and isoform IIB3 is released by macrophages and is present in the serum. Isoform IIB1' is expressed in myeloid and lymphoid cell lines, in normal spleen cells, and in resting or LPS-activated B-cells but is not detected in mesenteric lymph node cells.</text>
</comment>
<comment type="domain">
    <text>Contains 1 copy of a cytoplasmic motif that is referred to as the immunoreceptor tyrosine-based inhibitor motif (ITIM). This motif is involved in modulation of cellular responses. The phosphorylated ITIM motif can bind the SH2 domain of several SH2-containing phosphatases. Another tyrosine-containing sequence, more C-terminal, accounts for the ability of isoform IIB2 to trigger the phagocytosis of particulate immuno complexes.</text>
</comment>
<comment type="PTM">
    <text>Glycosylated.</text>
</comment>
<comment type="PTM">
    <text evidence="1">When coaggregated to BCR, isoform IIB1 and isoform IIB1' become tyrosine phosphorylated and bind to the SH2 domains of the protein tyrosine phosphatase PTPC1. Phosphorylated by SRC-type Tyr-kinases such as LYN, BLK, FYN and SYK (By similarity).</text>
</comment>
<comment type="polymorphism">
    <text evidence="6">Ly-17 alloantigenic system involves residues 116 and 161. Ly-17.1 mice are Pro-116 and Glu-161; Ly-17.2 mice are Leu-116 and Leu-161. These polymorphisms do not affect IgG binding.</text>
</comment>
<comment type="sequence caution" evidence="11">
    <conflict type="erroneous initiation">
        <sequence resource="EMBL-CDS" id="CAA28309"/>
    </conflict>
</comment>
<protein>
    <recommendedName>
        <fullName>Low affinity immunoglobulin gamma Fc region receptor II</fullName>
    </recommendedName>
    <alternativeName>
        <fullName>Fc gamma receptor IIB</fullName>
        <shortName>Fc-gamma RII</shortName>
        <shortName>Fc-gamma-RIIB</shortName>
        <shortName>FcRII</shortName>
    </alternativeName>
    <alternativeName>
        <fullName>IgG Fc receptor II beta</fullName>
    </alternativeName>
    <alternativeName>
        <fullName>Lymphocyte antigen 17</fullName>
        <shortName>Ly-17</shortName>
    </alternativeName>
    <cdAntigenName>CD32</cdAntigenName>
</protein>
<name>FCGR2_MOUSE</name>
<sequence>MESNWTVHVFSRTLCHMLLWTAVLNLAAGTHDLPKAVVKLEPPWIQVLKEDTVTLTCEGTHNPGNSSTQWFHNGRSIRSQVQASYTFKATVNDSGEYRCQMEQTRLSDPVDLGVISDWLLLQTPQLVFLEGETITLRCHSWRNKLLNRISFFHNEKSVRYHHYSSNFSIPKANHSHSGDYYCKGSLGRTLHQSKPVTITVQGPKSSRSLPVLTIVAAVTGIAVAAIVIILVSLVYLKKKQVPALPGNPDHREMGETLPEEVGEYRQPSGGSVPVSPGPPSGLEPTSSSPYNPPDLEEAAKTEAENTITYSLLKHPEALDEETEHDYQNHI</sequence>
<keyword id="KW-0025">Alternative splicing</keyword>
<keyword id="KW-1003">Cell membrane</keyword>
<keyword id="KW-0963">Cytoplasm</keyword>
<keyword id="KW-0206">Cytoskeleton</keyword>
<keyword id="KW-0903">Direct protein sequencing</keyword>
<keyword id="KW-1015">Disulfide bond</keyword>
<keyword id="KW-0325">Glycoprotein</keyword>
<keyword id="KW-0390">IgG-binding protein</keyword>
<keyword id="KW-0393">Immunoglobulin domain</keyword>
<keyword id="KW-0472">Membrane</keyword>
<keyword id="KW-0597">Phosphoprotein</keyword>
<keyword id="KW-0675">Receptor</keyword>
<keyword id="KW-1185">Reference proteome</keyword>
<keyword id="KW-0677">Repeat</keyword>
<keyword id="KW-0964">Secreted</keyword>
<keyword id="KW-0732">Signal</keyword>
<keyword id="KW-0812">Transmembrane</keyword>
<keyword id="KW-1133">Transmembrane helix</keyword>